<reference key="1">
    <citation type="journal article" date="1996" name="Nucleic Acids Res.">
        <title>Complete sequence analysis of the genome of the bacterium Mycoplasma pneumoniae.</title>
        <authorList>
            <person name="Himmelreich R."/>
            <person name="Hilbert H."/>
            <person name="Plagens H."/>
            <person name="Pirkl E."/>
            <person name="Li B.-C."/>
            <person name="Herrmann R."/>
        </authorList>
    </citation>
    <scope>NUCLEOTIDE SEQUENCE [LARGE SCALE GENOMIC DNA]</scope>
    <source>
        <strain>ATCC 29342 / M129 / Subtype 1</strain>
    </source>
</reference>
<name>RL10_MYCPN</name>
<gene>
    <name type="primary">rplJ</name>
    <name type="ordered locus">MPN_538</name>
    <name type="ORF">MP304</name>
</gene>
<comment type="function">
    <text evidence="1">Forms part of the ribosomal stalk, playing a central role in the interaction of the ribosome with GTP-bound translation factors.</text>
</comment>
<comment type="subunit">
    <text evidence="1">Part of the ribosomal stalk of the 50S ribosomal subunit. The N-terminus interacts with L11 and the large rRNA to form the base of the stalk. The C-terminus forms an elongated spine to which L12 dimers bind in a sequential fashion forming a multimeric L10(L12)X complex (By similarity).</text>
</comment>
<comment type="similarity">
    <text evidence="2">Belongs to the universal ribosomal protein uL10 family.</text>
</comment>
<proteinExistence type="evidence at protein level"/>
<accession>P75240</accession>
<dbReference type="EMBL" id="U00089">
    <property type="protein sequence ID" value="AAB95952.1"/>
    <property type="molecule type" value="Genomic_DNA"/>
</dbReference>
<dbReference type="PIR" id="S73630">
    <property type="entry name" value="S73630"/>
</dbReference>
<dbReference type="RefSeq" id="NP_110227.1">
    <property type="nucleotide sequence ID" value="NC_000912.1"/>
</dbReference>
<dbReference type="RefSeq" id="WP_010874895.1">
    <property type="nucleotide sequence ID" value="NZ_OU342337.1"/>
</dbReference>
<dbReference type="PDB" id="7OOD">
    <property type="method" value="EM"/>
    <property type="resolution" value="3.40 A"/>
    <property type="chains" value="g=1-161"/>
</dbReference>
<dbReference type="PDB" id="7P6Z">
    <property type="method" value="EM"/>
    <property type="resolution" value="3.50 A"/>
    <property type="chains" value="g=1-161"/>
</dbReference>
<dbReference type="PDB" id="7PAH">
    <property type="method" value="EM"/>
    <property type="resolution" value="9.50 A"/>
    <property type="chains" value="g=1-161"/>
</dbReference>
<dbReference type="PDB" id="7PAI">
    <property type="method" value="EM"/>
    <property type="resolution" value="6.70 A"/>
    <property type="chains" value="g=1-161"/>
</dbReference>
<dbReference type="PDB" id="7PAJ">
    <property type="method" value="EM"/>
    <property type="resolution" value="7.30 A"/>
    <property type="chains" value="g=1-161"/>
</dbReference>
<dbReference type="PDB" id="7PAK">
    <property type="method" value="EM"/>
    <property type="resolution" value="5.30 A"/>
    <property type="chains" value="g=1-161"/>
</dbReference>
<dbReference type="PDB" id="7PAL">
    <property type="method" value="EM"/>
    <property type="resolution" value="4.70 A"/>
    <property type="chains" value="g=1-161"/>
</dbReference>
<dbReference type="PDB" id="7PAM">
    <property type="method" value="EM"/>
    <property type="resolution" value="6.80 A"/>
    <property type="chains" value="g=1-161"/>
</dbReference>
<dbReference type="PDB" id="7PAN">
    <property type="method" value="EM"/>
    <property type="resolution" value="9.70 A"/>
    <property type="chains" value="g=1-161"/>
</dbReference>
<dbReference type="PDB" id="7PAO">
    <property type="method" value="EM"/>
    <property type="resolution" value="7.00 A"/>
    <property type="chains" value="g=1-161"/>
</dbReference>
<dbReference type="PDB" id="7PAQ">
    <property type="method" value="EM"/>
    <property type="resolution" value="8.90 A"/>
    <property type="chains" value="g=1-161"/>
</dbReference>
<dbReference type="PDB" id="7PAR">
    <property type="method" value="EM"/>
    <property type="resolution" value="8.20 A"/>
    <property type="chains" value="g=1-161"/>
</dbReference>
<dbReference type="PDB" id="7PAS">
    <property type="method" value="EM"/>
    <property type="resolution" value="16.00 A"/>
    <property type="chains" value="g=1-161"/>
</dbReference>
<dbReference type="PDB" id="7PAT">
    <property type="method" value="EM"/>
    <property type="resolution" value="9.20 A"/>
    <property type="chains" value="g=1-161"/>
</dbReference>
<dbReference type="PDB" id="7PAU">
    <property type="method" value="EM"/>
    <property type="resolution" value="8.30 A"/>
    <property type="chains" value="g=1-161"/>
</dbReference>
<dbReference type="PDB" id="7PH9">
    <property type="method" value="EM"/>
    <property type="resolution" value="8.70 A"/>
    <property type="chains" value="g=1-161"/>
</dbReference>
<dbReference type="PDB" id="7PHA">
    <property type="method" value="EM"/>
    <property type="resolution" value="8.50 A"/>
    <property type="chains" value="g=1-161"/>
</dbReference>
<dbReference type="PDB" id="7PHB">
    <property type="method" value="EM"/>
    <property type="resolution" value="4.90 A"/>
    <property type="chains" value="g=1-161"/>
</dbReference>
<dbReference type="PDB" id="7PHC">
    <property type="method" value="EM"/>
    <property type="resolution" value="9.90 A"/>
    <property type="chains" value="g=1-161"/>
</dbReference>
<dbReference type="PDB" id="7PI8">
    <property type="method" value="EM"/>
    <property type="resolution" value="8.90 A"/>
    <property type="chains" value="g=1-161"/>
</dbReference>
<dbReference type="PDB" id="7PI9">
    <property type="method" value="EM"/>
    <property type="resolution" value="6.30 A"/>
    <property type="chains" value="g=1-161"/>
</dbReference>
<dbReference type="PDB" id="7PIA">
    <property type="method" value="EM"/>
    <property type="resolution" value="13.60 A"/>
    <property type="chains" value="g=1-161"/>
</dbReference>
<dbReference type="PDB" id="7PIB">
    <property type="method" value="EM"/>
    <property type="resolution" value="4.70 A"/>
    <property type="chains" value="g=1-161"/>
</dbReference>
<dbReference type="PDB" id="7PIC">
    <property type="method" value="EM"/>
    <property type="resolution" value="9.10 A"/>
    <property type="chains" value="g=1-161"/>
</dbReference>
<dbReference type="PDB" id="7PIO">
    <property type="method" value="EM"/>
    <property type="resolution" value="9.50 A"/>
    <property type="chains" value="g=1-161"/>
</dbReference>
<dbReference type="PDB" id="7PIP">
    <property type="method" value="EM"/>
    <property type="resolution" value="9.30 A"/>
    <property type="chains" value="g=1-161"/>
</dbReference>
<dbReference type="PDB" id="7PIQ">
    <property type="method" value="EM"/>
    <property type="resolution" value="9.70 A"/>
    <property type="chains" value="g=1-161"/>
</dbReference>
<dbReference type="PDB" id="7PIR">
    <property type="method" value="EM"/>
    <property type="resolution" value="12.10 A"/>
    <property type="chains" value="g=1-161"/>
</dbReference>
<dbReference type="PDB" id="7PIS">
    <property type="method" value="EM"/>
    <property type="resolution" value="15.00 A"/>
    <property type="chains" value="g=1-161"/>
</dbReference>
<dbReference type="PDB" id="7PIT">
    <property type="method" value="EM"/>
    <property type="resolution" value="5.70 A"/>
    <property type="chains" value="g=1-161"/>
</dbReference>
<dbReference type="PDB" id="8P7X">
    <property type="method" value="EM"/>
    <property type="resolution" value="3.03 A"/>
    <property type="chains" value="g=1-161"/>
</dbReference>
<dbReference type="PDB" id="8P7Y">
    <property type="method" value="EM"/>
    <property type="resolution" value="3.70 A"/>
    <property type="chains" value="g=1-161"/>
</dbReference>
<dbReference type="PDB" id="8P8B">
    <property type="method" value="EM"/>
    <property type="resolution" value="2.90 A"/>
    <property type="chains" value="g=1-161"/>
</dbReference>
<dbReference type="PDB" id="8P8V">
    <property type="method" value="EM"/>
    <property type="resolution" value="8.70 A"/>
    <property type="chains" value="g=1-161"/>
</dbReference>
<dbReference type="PDB" id="8P8W">
    <property type="method" value="EM"/>
    <property type="resolution" value="8.70 A"/>
    <property type="chains" value="g=1-161"/>
</dbReference>
<dbReference type="PDBsum" id="7OOD"/>
<dbReference type="PDBsum" id="7P6Z"/>
<dbReference type="PDBsum" id="7PAH"/>
<dbReference type="PDBsum" id="7PAI"/>
<dbReference type="PDBsum" id="7PAJ"/>
<dbReference type="PDBsum" id="7PAK"/>
<dbReference type="PDBsum" id="7PAL"/>
<dbReference type="PDBsum" id="7PAM"/>
<dbReference type="PDBsum" id="7PAN"/>
<dbReference type="PDBsum" id="7PAO"/>
<dbReference type="PDBsum" id="7PAQ"/>
<dbReference type="PDBsum" id="7PAR"/>
<dbReference type="PDBsum" id="7PAS"/>
<dbReference type="PDBsum" id="7PAT"/>
<dbReference type="PDBsum" id="7PAU"/>
<dbReference type="PDBsum" id="7PH9"/>
<dbReference type="PDBsum" id="7PHA"/>
<dbReference type="PDBsum" id="7PHB"/>
<dbReference type="PDBsum" id="7PHC"/>
<dbReference type="PDBsum" id="7PI8"/>
<dbReference type="PDBsum" id="7PI9"/>
<dbReference type="PDBsum" id="7PIA"/>
<dbReference type="PDBsum" id="7PIB"/>
<dbReference type="PDBsum" id="7PIC"/>
<dbReference type="PDBsum" id="7PIO"/>
<dbReference type="PDBsum" id="7PIP"/>
<dbReference type="PDBsum" id="7PIQ"/>
<dbReference type="PDBsum" id="7PIR"/>
<dbReference type="PDBsum" id="7PIS"/>
<dbReference type="PDBsum" id="7PIT"/>
<dbReference type="PDBsum" id="8P7X"/>
<dbReference type="PDBsum" id="8P7Y"/>
<dbReference type="PDBsum" id="8P8B"/>
<dbReference type="PDBsum" id="8P8V"/>
<dbReference type="PDBsum" id="8P8W"/>
<dbReference type="EMDB" id="EMD-13234"/>
<dbReference type="EMDB" id="EMD-13272"/>
<dbReference type="EMDB" id="EMD-13273"/>
<dbReference type="EMDB" id="EMD-13274"/>
<dbReference type="EMDB" id="EMD-13275"/>
<dbReference type="EMDB" id="EMD-13276"/>
<dbReference type="EMDB" id="EMD-13277"/>
<dbReference type="EMDB" id="EMD-13278"/>
<dbReference type="EMDB" id="EMD-13279"/>
<dbReference type="EMDB" id="EMD-13280"/>
<dbReference type="EMDB" id="EMD-13281"/>
<dbReference type="EMDB" id="EMD-13282"/>
<dbReference type="EMDB" id="EMD-13285"/>
<dbReference type="EMDB" id="EMD-13286"/>
<dbReference type="EMDB" id="EMD-13410"/>
<dbReference type="EMDB" id="EMD-13411"/>
<dbReference type="EMDB" id="EMD-13412"/>
<dbReference type="EMDB" id="EMD-13413"/>
<dbReference type="EMDB" id="EMD-13432"/>
<dbReference type="EMDB" id="EMD-13433"/>
<dbReference type="EMDB" id="EMD-13434"/>
<dbReference type="EMDB" id="EMD-13435"/>
<dbReference type="EMDB" id="EMD-13436"/>
<dbReference type="EMDB" id="EMD-13445"/>
<dbReference type="EMDB" id="EMD-13446"/>
<dbReference type="EMDB" id="EMD-13447"/>
<dbReference type="EMDB" id="EMD-13448"/>
<dbReference type="EMDB" id="EMD-13449"/>
<dbReference type="EMDB" id="EMD-13450"/>
<dbReference type="SMR" id="P75240"/>
<dbReference type="IntAct" id="P75240">
    <property type="interactions" value="1"/>
</dbReference>
<dbReference type="STRING" id="272634.MPN_538"/>
<dbReference type="EnsemblBacteria" id="AAB95952">
    <property type="protein sequence ID" value="AAB95952"/>
    <property type="gene ID" value="MPN_538"/>
</dbReference>
<dbReference type="GeneID" id="66608780"/>
<dbReference type="KEGG" id="mpn:MPN_538"/>
<dbReference type="PATRIC" id="fig|272634.6.peg.600"/>
<dbReference type="HOGENOM" id="CLU_092227_1_2_14"/>
<dbReference type="OrthoDB" id="9808307at2"/>
<dbReference type="BioCyc" id="MPNE272634:G1GJ3-887-MONOMER"/>
<dbReference type="Proteomes" id="UP000000808">
    <property type="component" value="Chromosome"/>
</dbReference>
<dbReference type="GO" id="GO:0015934">
    <property type="term" value="C:large ribosomal subunit"/>
    <property type="evidence" value="ECO:0007669"/>
    <property type="project" value="InterPro"/>
</dbReference>
<dbReference type="GO" id="GO:0070180">
    <property type="term" value="F:large ribosomal subunit rRNA binding"/>
    <property type="evidence" value="ECO:0007669"/>
    <property type="project" value="UniProtKB-UniRule"/>
</dbReference>
<dbReference type="GO" id="GO:0003735">
    <property type="term" value="F:structural constituent of ribosome"/>
    <property type="evidence" value="ECO:0007669"/>
    <property type="project" value="InterPro"/>
</dbReference>
<dbReference type="GO" id="GO:0006412">
    <property type="term" value="P:translation"/>
    <property type="evidence" value="ECO:0007669"/>
    <property type="project" value="UniProtKB-UniRule"/>
</dbReference>
<dbReference type="CDD" id="cd05797">
    <property type="entry name" value="Ribosomal_L10"/>
    <property type="match status" value="1"/>
</dbReference>
<dbReference type="Gene3D" id="3.30.70.1730">
    <property type="match status" value="1"/>
</dbReference>
<dbReference type="Gene3D" id="6.10.250.290">
    <property type="match status" value="1"/>
</dbReference>
<dbReference type="HAMAP" id="MF_00362">
    <property type="entry name" value="Ribosomal_uL10"/>
    <property type="match status" value="1"/>
</dbReference>
<dbReference type="InterPro" id="IPR001790">
    <property type="entry name" value="Ribosomal_uL10"/>
</dbReference>
<dbReference type="InterPro" id="IPR043141">
    <property type="entry name" value="Ribosomal_uL10-like_sf"/>
</dbReference>
<dbReference type="InterPro" id="IPR022973">
    <property type="entry name" value="Ribosomal_uL10_bac"/>
</dbReference>
<dbReference type="InterPro" id="IPR047865">
    <property type="entry name" value="Ribosomal_uL10_bac_type"/>
</dbReference>
<dbReference type="InterPro" id="IPR002363">
    <property type="entry name" value="Ribosomal_uL10_CS_bac"/>
</dbReference>
<dbReference type="NCBIfam" id="NF000955">
    <property type="entry name" value="PRK00099.1-1"/>
    <property type="match status" value="1"/>
</dbReference>
<dbReference type="PANTHER" id="PTHR11560">
    <property type="entry name" value="39S RIBOSOMAL PROTEIN L10, MITOCHONDRIAL"/>
    <property type="match status" value="1"/>
</dbReference>
<dbReference type="Pfam" id="PF00466">
    <property type="entry name" value="Ribosomal_L10"/>
    <property type="match status" value="1"/>
</dbReference>
<dbReference type="SUPFAM" id="SSF160369">
    <property type="entry name" value="Ribosomal protein L10-like"/>
    <property type="match status" value="1"/>
</dbReference>
<dbReference type="PROSITE" id="PS01109">
    <property type="entry name" value="RIBOSOMAL_L10"/>
    <property type="match status" value="1"/>
</dbReference>
<feature type="chain" id="PRO_0000154672" description="Large ribosomal subunit protein uL10">
    <location>
        <begin position="1"/>
        <end position="161"/>
    </location>
</feature>
<feature type="helix" evidence="4">
    <location>
        <begin position="4"/>
        <end position="20"/>
    </location>
</feature>
<feature type="strand" evidence="4">
    <location>
        <begin position="23"/>
        <end position="26"/>
    </location>
</feature>
<feature type="helix" evidence="4">
    <location>
        <begin position="34"/>
        <end position="44"/>
    </location>
</feature>
<feature type="strand" evidence="4">
    <location>
        <begin position="50"/>
        <end position="52"/>
    </location>
</feature>
<feature type="helix" evidence="4">
    <location>
        <begin position="56"/>
        <end position="65"/>
    </location>
</feature>
<feature type="helix" evidence="4">
    <location>
        <begin position="71"/>
        <end position="73"/>
    </location>
</feature>
<feature type="strand" evidence="4">
    <location>
        <begin position="75"/>
        <end position="78"/>
    </location>
</feature>
<feature type="strand" evidence="4">
    <location>
        <begin position="82"/>
        <end position="87"/>
    </location>
</feature>
<feature type="helix" evidence="4">
    <location>
        <begin position="90"/>
        <end position="102"/>
    </location>
</feature>
<feature type="strand" evidence="4">
    <location>
        <begin position="109"/>
        <end position="113"/>
    </location>
</feature>
<feature type="strand" evidence="3">
    <location>
        <begin position="116"/>
        <end position="119"/>
    </location>
</feature>
<feature type="helix" evidence="4">
    <location>
        <begin position="120"/>
        <end position="126"/>
    </location>
</feature>
<keyword id="KW-0002">3D-structure</keyword>
<keyword id="KW-1185">Reference proteome</keyword>
<keyword id="KW-0687">Ribonucleoprotein</keyword>
<keyword id="KW-0689">Ribosomal protein</keyword>
<keyword id="KW-0694">RNA-binding</keyword>
<keyword id="KW-0699">rRNA-binding</keyword>
<protein>
    <recommendedName>
        <fullName evidence="2">Large ribosomal subunit protein uL10</fullName>
    </recommendedName>
    <alternativeName>
        <fullName>50S ribosomal protein L10</fullName>
    </alternativeName>
</protein>
<organism>
    <name type="scientific">Mycoplasma pneumoniae (strain ATCC 29342 / M129 / Subtype 1)</name>
    <name type="common">Mycoplasmoides pneumoniae</name>
    <dbReference type="NCBI Taxonomy" id="272634"/>
    <lineage>
        <taxon>Bacteria</taxon>
        <taxon>Bacillati</taxon>
        <taxon>Mycoplasmatota</taxon>
        <taxon>Mycoplasmoidales</taxon>
        <taxon>Mycoplasmoidaceae</taxon>
        <taxon>Mycoplasmoides</taxon>
    </lineage>
</organism>
<evidence type="ECO:0000250" key="1"/>
<evidence type="ECO:0000305" key="2"/>
<evidence type="ECO:0007829" key="3">
    <source>
        <dbReference type="PDB" id="7OOD"/>
    </source>
</evidence>
<evidence type="ECO:0007829" key="4">
    <source>
        <dbReference type="PDB" id="8P8B"/>
    </source>
</evidence>
<sequence>MEAKKDKAQQVADVSHLLSTSAGFVIFDYTSMSAIEATSIRKKLFKNGSKIKVIKNNILRRALKAGKFEGIDETAIKGKLAVAVGVNEIVETLKAVDGVVKAKEAMNFVCGYFDNRAFNSADLEKIAKLPGRNELYGMFLSVLQAPLRKFLYALEAVKAAK</sequence>